<reference key="1">
    <citation type="journal article" date="2008" name="J. Bacteriol.">
        <title>The complete genome sequence of Escherichia coli DH10B: insights into the biology of a laboratory workhorse.</title>
        <authorList>
            <person name="Durfee T."/>
            <person name="Nelson R."/>
            <person name="Baldwin S."/>
            <person name="Plunkett G. III"/>
            <person name="Burland V."/>
            <person name="Mau B."/>
            <person name="Petrosino J.F."/>
            <person name="Qin X."/>
            <person name="Muzny D.M."/>
            <person name="Ayele M."/>
            <person name="Gibbs R.A."/>
            <person name="Csorgo B."/>
            <person name="Posfai G."/>
            <person name="Weinstock G.M."/>
            <person name="Blattner F.R."/>
        </authorList>
    </citation>
    <scope>NUCLEOTIDE SEQUENCE [LARGE SCALE GENOMIC DNA]</scope>
    <source>
        <strain>K12 / DH10B</strain>
    </source>
</reference>
<feature type="chain" id="PRO_1000188846" description="L-ribulose-5-phosphate 4-epimerase UlaF">
    <location>
        <begin position="1"/>
        <end position="228"/>
    </location>
</feature>
<feature type="active site" description="Proton donor/acceptor" evidence="1">
    <location>
        <position position="118"/>
    </location>
</feature>
<feature type="active site" description="Proton donor/acceptor" evidence="1">
    <location>
        <position position="225"/>
    </location>
</feature>
<feature type="binding site" evidence="1">
    <location>
        <begin position="26"/>
        <end position="27"/>
    </location>
    <ligand>
        <name>substrate</name>
    </ligand>
</feature>
<feature type="binding site" evidence="1">
    <location>
        <begin position="43"/>
        <end position="44"/>
    </location>
    <ligand>
        <name>substrate</name>
    </ligand>
</feature>
<feature type="binding site" evidence="1">
    <location>
        <begin position="72"/>
        <end position="73"/>
    </location>
    <ligand>
        <name>substrate</name>
    </ligand>
</feature>
<feature type="binding site" evidence="1">
    <location>
        <position position="74"/>
    </location>
    <ligand>
        <name>Zn(2+)</name>
        <dbReference type="ChEBI" id="CHEBI:29105"/>
    </ligand>
</feature>
<feature type="binding site" evidence="1">
    <location>
        <position position="93"/>
    </location>
    <ligand>
        <name>Zn(2+)</name>
        <dbReference type="ChEBI" id="CHEBI:29105"/>
    </ligand>
</feature>
<feature type="binding site" evidence="1">
    <location>
        <position position="95"/>
    </location>
    <ligand>
        <name>Zn(2+)</name>
        <dbReference type="ChEBI" id="CHEBI:29105"/>
    </ligand>
</feature>
<feature type="binding site" evidence="1">
    <location>
        <position position="167"/>
    </location>
    <ligand>
        <name>Zn(2+)</name>
        <dbReference type="ChEBI" id="CHEBI:29105"/>
    </ligand>
</feature>
<accession>B1XDU9</accession>
<comment type="function">
    <text evidence="1">Catalyzes the isomerization of L-ribulose 5-phosphate to D-xylulose 5-phosphate. Is involved in the anaerobic L-ascorbate utilization.</text>
</comment>
<comment type="catalytic activity">
    <reaction evidence="1">
        <text>L-ribulose 5-phosphate = D-xylulose 5-phosphate</text>
        <dbReference type="Rhea" id="RHEA:22368"/>
        <dbReference type="ChEBI" id="CHEBI:57737"/>
        <dbReference type="ChEBI" id="CHEBI:58226"/>
        <dbReference type="EC" id="5.1.3.4"/>
    </reaction>
</comment>
<comment type="cofactor">
    <cofactor evidence="1">
        <name>Zn(2+)</name>
        <dbReference type="ChEBI" id="CHEBI:29105"/>
    </cofactor>
    <text evidence="1">Binds 1 zinc ion per subunit.</text>
</comment>
<comment type="pathway">
    <text evidence="1">Cofactor degradation; L-ascorbate degradation; D-xylulose 5-phosphate from L-ascorbate: step 4/4.</text>
</comment>
<comment type="induction">
    <text evidence="1">Induced by L-ascorbate. Repressed by UlaR.</text>
</comment>
<comment type="similarity">
    <text evidence="1">Belongs to the aldolase class II family. AraD/FucA subfamily.</text>
</comment>
<evidence type="ECO:0000255" key="1">
    <source>
        <dbReference type="HAMAP-Rule" id="MF_01952"/>
    </source>
</evidence>
<gene>
    <name evidence="1" type="primary">ulaF</name>
    <name type="ordered locus">ECDH10B_4393</name>
</gene>
<keyword id="KW-0119">Carbohydrate metabolism</keyword>
<keyword id="KW-0413">Isomerase</keyword>
<keyword id="KW-0479">Metal-binding</keyword>
<keyword id="KW-0862">Zinc</keyword>
<proteinExistence type="inferred from homology"/>
<dbReference type="EC" id="5.1.3.4" evidence="1"/>
<dbReference type="EMBL" id="CP000948">
    <property type="protein sequence ID" value="ACB05186.1"/>
    <property type="molecule type" value="Genomic_DNA"/>
</dbReference>
<dbReference type="RefSeq" id="WP_001170847.1">
    <property type="nucleotide sequence ID" value="NC_010473.1"/>
</dbReference>
<dbReference type="SMR" id="B1XDU9"/>
<dbReference type="KEGG" id="ecd:ECDH10B_4393"/>
<dbReference type="HOGENOM" id="CLU_006033_5_0_6"/>
<dbReference type="UniPathway" id="UPA00263">
    <property type="reaction ID" value="UER00380"/>
</dbReference>
<dbReference type="GO" id="GO:0005829">
    <property type="term" value="C:cytosol"/>
    <property type="evidence" value="ECO:0007669"/>
    <property type="project" value="TreeGrafter"/>
</dbReference>
<dbReference type="GO" id="GO:0016832">
    <property type="term" value="F:aldehyde-lyase activity"/>
    <property type="evidence" value="ECO:0007669"/>
    <property type="project" value="TreeGrafter"/>
</dbReference>
<dbReference type="GO" id="GO:0008742">
    <property type="term" value="F:L-ribulose-phosphate 4-epimerase activity"/>
    <property type="evidence" value="ECO:0007669"/>
    <property type="project" value="UniProtKB-UniRule"/>
</dbReference>
<dbReference type="GO" id="GO:0008270">
    <property type="term" value="F:zinc ion binding"/>
    <property type="evidence" value="ECO:0007669"/>
    <property type="project" value="UniProtKB-UniRule"/>
</dbReference>
<dbReference type="GO" id="GO:0019854">
    <property type="term" value="P:L-ascorbic acid catabolic process"/>
    <property type="evidence" value="ECO:0007669"/>
    <property type="project" value="UniProtKB-UniRule"/>
</dbReference>
<dbReference type="GO" id="GO:0019323">
    <property type="term" value="P:pentose catabolic process"/>
    <property type="evidence" value="ECO:0007669"/>
    <property type="project" value="TreeGrafter"/>
</dbReference>
<dbReference type="CDD" id="cd00398">
    <property type="entry name" value="Aldolase_II"/>
    <property type="match status" value="1"/>
</dbReference>
<dbReference type="FunFam" id="3.40.225.10:FF:000001">
    <property type="entry name" value="L-ribulose-5-phosphate 4-epimerase UlaF"/>
    <property type="match status" value="1"/>
</dbReference>
<dbReference type="Gene3D" id="3.40.225.10">
    <property type="entry name" value="Class II aldolase/adducin N-terminal domain"/>
    <property type="match status" value="1"/>
</dbReference>
<dbReference type="HAMAP" id="MF_01952">
    <property type="entry name" value="UlaF"/>
    <property type="match status" value="1"/>
</dbReference>
<dbReference type="InterPro" id="IPR050197">
    <property type="entry name" value="Aldolase_class_II_sugar_metab"/>
</dbReference>
<dbReference type="InterPro" id="IPR001303">
    <property type="entry name" value="Aldolase_II/adducin_N"/>
</dbReference>
<dbReference type="InterPro" id="IPR036409">
    <property type="entry name" value="Aldolase_II/adducin_N_sf"/>
</dbReference>
<dbReference type="InterPro" id="IPR023499">
    <property type="entry name" value="UlaF"/>
</dbReference>
<dbReference type="NCBIfam" id="NF006047">
    <property type="entry name" value="PRK08193.1"/>
    <property type="match status" value="1"/>
</dbReference>
<dbReference type="NCBIfam" id="NF009003">
    <property type="entry name" value="PRK12348.1"/>
    <property type="match status" value="1"/>
</dbReference>
<dbReference type="PANTHER" id="PTHR22789">
    <property type="entry name" value="FUCULOSE PHOSPHATE ALDOLASE"/>
    <property type="match status" value="1"/>
</dbReference>
<dbReference type="PANTHER" id="PTHR22789:SF9">
    <property type="entry name" value="L-RIBULOSE-5-PHOSPHATE 4-EPIMERASE ULAF"/>
    <property type="match status" value="1"/>
</dbReference>
<dbReference type="Pfam" id="PF00596">
    <property type="entry name" value="Aldolase_II"/>
    <property type="match status" value="1"/>
</dbReference>
<dbReference type="SMART" id="SM01007">
    <property type="entry name" value="Aldolase_II"/>
    <property type="match status" value="1"/>
</dbReference>
<dbReference type="SUPFAM" id="SSF53639">
    <property type="entry name" value="AraD/HMP-PK domain-like"/>
    <property type="match status" value="1"/>
</dbReference>
<organism>
    <name type="scientific">Escherichia coli (strain K12 / DH10B)</name>
    <dbReference type="NCBI Taxonomy" id="316385"/>
    <lineage>
        <taxon>Bacteria</taxon>
        <taxon>Pseudomonadati</taxon>
        <taxon>Pseudomonadota</taxon>
        <taxon>Gammaproteobacteria</taxon>
        <taxon>Enterobacterales</taxon>
        <taxon>Enterobacteriaceae</taxon>
        <taxon>Escherichia</taxon>
    </lineage>
</organism>
<sequence>MQKLKQQVFEANMELPRYGLVTFTWGNVSAIDRERGLVVIKPSGVAYETMKAADMVVVDMSGKVVEGEYRPSSDTATHLELYRRYPSLGGIVHTHSTHATAWAQAGLAIPALGTTHADYFFGDIPCTRGLSEEEVQGEYELNTGKVIIETLGNAEPLHTPGIVVYQHGPFAWGKDAHDAVHNAVVMEEVAKMAWIARGINPQLNHIDSFLMNKHFMRKHGPNAYYGQK</sequence>
<protein>
    <recommendedName>
        <fullName evidence="1">L-ribulose-5-phosphate 4-epimerase UlaF</fullName>
        <ecNumber evidence="1">5.1.3.4</ecNumber>
    </recommendedName>
    <alternativeName>
        <fullName evidence="1">L-ascorbate utilization protein F</fullName>
    </alternativeName>
    <alternativeName>
        <fullName evidence="1">Phosphoribulose isomerase</fullName>
    </alternativeName>
</protein>
<name>ULAF_ECODH</name>